<reference key="1">
    <citation type="journal article" date="2008" name="Science">
        <title>Genome of an endosymbiont coupling N2 fixation to cellulolysis within RT protist cells in termite gut.</title>
        <authorList>
            <person name="Hongoh Y."/>
            <person name="Sharma V.K."/>
            <person name="Prakash T."/>
            <person name="Noda S."/>
            <person name="Toh H."/>
            <person name="Taylor T.D."/>
            <person name="Kudo T."/>
            <person name="Sakaki Y."/>
            <person name="Toyoda A."/>
            <person name="Hattori M."/>
            <person name="Ohkuma M."/>
        </authorList>
    </citation>
    <scope>NUCLEOTIDE SEQUENCE [LARGE SCALE GENOMIC DNA]</scope>
</reference>
<protein>
    <recommendedName>
        <fullName evidence="1">DNA ligase</fullName>
        <ecNumber evidence="1">6.5.1.2</ecNumber>
    </recommendedName>
    <alternativeName>
        <fullName evidence="1">Polydeoxyribonucleotide synthase [NAD(+)]</fullName>
    </alternativeName>
</protein>
<feature type="chain" id="PRO_0000380295" description="DNA ligase">
    <location>
        <begin position="1"/>
        <end position="663"/>
    </location>
</feature>
<feature type="domain" description="BRCT" evidence="1">
    <location>
        <begin position="585"/>
        <end position="663"/>
    </location>
</feature>
<feature type="active site" description="N6-AMP-lysine intermediate" evidence="1">
    <location>
        <position position="112"/>
    </location>
</feature>
<feature type="binding site" evidence="1">
    <location>
        <begin position="31"/>
        <end position="35"/>
    </location>
    <ligand>
        <name>NAD(+)</name>
        <dbReference type="ChEBI" id="CHEBI:57540"/>
    </ligand>
</feature>
<feature type="binding site" evidence="1">
    <location>
        <begin position="80"/>
        <end position="81"/>
    </location>
    <ligand>
        <name>NAD(+)</name>
        <dbReference type="ChEBI" id="CHEBI:57540"/>
    </ligand>
</feature>
<feature type="binding site" evidence="1">
    <location>
        <position position="110"/>
    </location>
    <ligand>
        <name>NAD(+)</name>
        <dbReference type="ChEBI" id="CHEBI:57540"/>
    </ligand>
</feature>
<feature type="binding site" evidence="1">
    <location>
        <position position="133"/>
    </location>
    <ligand>
        <name>NAD(+)</name>
        <dbReference type="ChEBI" id="CHEBI:57540"/>
    </ligand>
</feature>
<feature type="binding site" evidence="1">
    <location>
        <position position="170"/>
    </location>
    <ligand>
        <name>NAD(+)</name>
        <dbReference type="ChEBI" id="CHEBI:57540"/>
    </ligand>
</feature>
<feature type="binding site" evidence="1">
    <location>
        <position position="285"/>
    </location>
    <ligand>
        <name>NAD(+)</name>
        <dbReference type="ChEBI" id="CHEBI:57540"/>
    </ligand>
</feature>
<feature type="binding site" evidence="1">
    <location>
        <position position="309"/>
    </location>
    <ligand>
        <name>NAD(+)</name>
        <dbReference type="ChEBI" id="CHEBI:57540"/>
    </ligand>
</feature>
<feature type="binding site" evidence="1">
    <location>
        <position position="404"/>
    </location>
    <ligand>
        <name>Zn(2+)</name>
        <dbReference type="ChEBI" id="CHEBI:29105"/>
    </ligand>
</feature>
<feature type="binding site" evidence="1">
    <location>
        <position position="407"/>
    </location>
    <ligand>
        <name>Zn(2+)</name>
        <dbReference type="ChEBI" id="CHEBI:29105"/>
    </ligand>
</feature>
<feature type="binding site" evidence="1">
    <location>
        <position position="422"/>
    </location>
    <ligand>
        <name>Zn(2+)</name>
        <dbReference type="ChEBI" id="CHEBI:29105"/>
    </ligand>
</feature>
<feature type="binding site" evidence="1">
    <location>
        <position position="428"/>
    </location>
    <ligand>
        <name>Zn(2+)</name>
        <dbReference type="ChEBI" id="CHEBI:29105"/>
    </ligand>
</feature>
<comment type="function">
    <text evidence="1">DNA ligase that catalyzes the formation of phosphodiester linkages between 5'-phosphoryl and 3'-hydroxyl groups in double-stranded DNA using NAD as a coenzyme and as the energy source for the reaction. It is essential for DNA replication and repair of damaged DNA.</text>
</comment>
<comment type="catalytic activity">
    <reaction evidence="1">
        <text>NAD(+) + (deoxyribonucleotide)n-3'-hydroxyl + 5'-phospho-(deoxyribonucleotide)m = (deoxyribonucleotide)n+m + AMP + beta-nicotinamide D-nucleotide.</text>
        <dbReference type="EC" id="6.5.1.2"/>
    </reaction>
</comment>
<comment type="cofactor">
    <cofactor evidence="1">
        <name>Mg(2+)</name>
        <dbReference type="ChEBI" id="CHEBI:18420"/>
    </cofactor>
    <cofactor evidence="1">
        <name>Mn(2+)</name>
        <dbReference type="ChEBI" id="CHEBI:29035"/>
    </cofactor>
</comment>
<comment type="similarity">
    <text evidence="1">Belongs to the NAD-dependent DNA ligase family. LigA subfamily.</text>
</comment>
<evidence type="ECO:0000255" key="1">
    <source>
        <dbReference type="HAMAP-Rule" id="MF_01588"/>
    </source>
</evidence>
<gene>
    <name evidence="1" type="primary">ligA</name>
    <name type="ordered locus">CFPG_628</name>
</gene>
<dbReference type="EC" id="6.5.1.2" evidence="1"/>
<dbReference type="EMBL" id="AP010656">
    <property type="protein sequence ID" value="BAG83891.1"/>
    <property type="molecule type" value="Genomic_DNA"/>
</dbReference>
<dbReference type="RefSeq" id="WP_012573651.1">
    <property type="nucleotide sequence ID" value="NC_011565.1"/>
</dbReference>
<dbReference type="SMR" id="B6YRR9"/>
<dbReference type="STRING" id="511995.CFPG_628"/>
<dbReference type="KEGG" id="aps:CFPG_628"/>
<dbReference type="eggNOG" id="COG0272">
    <property type="taxonomic scope" value="Bacteria"/>
</dbReference>
<dbReference type="HOGENOM" id="CLU_007764_2_0_10"/>
<dbReference type="OrthoDB" id="9759736at2"/>
<dbReference type="Proteomes" id="UP000000723">
    <property type="component" value="Chromosome"/>
</dbReference>
<dbReference type="GO" id="GO:0005829">
    <property type="term" value="C:cytosol"/>
    <property type="evidence" value="ECO:0007669"/>
    <property type="project" value="TreeGrafter"/>
</dbReference>
<dbReference type="GO" id="GO:0003911">
    <property type="term" value="F:DNA ligase (NAD+) activity"/>
    <property type="evidence" value="ECO:0007669"/>
    <property type="project" value="UniProtKB-UniRule"/>
</dbReference>
<dbReference type="GO" id="GO:0046872">
    <property type="term" value="F:metal ion binding"/>
    <property type="evidence" value="ECO:0007669"/>
    <property type="project" value="UniProtKB-KW"/>
</dbReference>
<dbReference type="GO" id="GO:0006281">
    <property type="term" value="P:DNA repair"/>
    <property type="evidence" value="ECO:0007669"/>
    <property type="project" value="UniProtKB-KW"/>
</dbReference>
<dbReference type="GO" id="GO:0006260">
    <property type="term" value="P:DNA replication"/>
    <property type="evidence" value="ECO:0007669"/>
    <property type="project" value="UniProtKB-KW"/>
</dbReference>
<dbReference type="CDD" id="cd17748">
    <property type="entry name" value="BRCT_DNA_ligase_like"/>
    <property type="match status" value="1"/>
</dbReference>
<dbReference type="CDD" id="cd00114">
    <property type="entry name" value="LIGANc"/>
    <property type="match status" value="1"/>
</dbReference>
<dbReference type="FunFam" id="1.10.150.20:FF:000006">
    <property type="entry name" value="DNA ligase"/>
    <property type="match status" value="1"/>
</dbReference>
<dbReference type="FunFam" id="3.30.470.30:FF:000001">
    <property type="entry name" value="DNA ligase"/>
    <property type="match status" value="1"/>
</dbReference>
<dbReference type="Gene3D" id="6.20.10.30">
    <property type="match status" value="1"/>
</dbReference>
<dbReference type="Gene3D" id="1.10.150.20">
    <property type="entry name" value="5' to 3' exonuclease, C-terminal subdomain"/>
    <property type="match status" value="2"/>
</dbReference>
<dbReference type="Gene3D" id="3.40.50.10190">
    <property type="entry name" value="BRCT domain"/>
    <property type="match status" value="1"/>
</dbReference>
<dbReference type="Gene3D" id="3.30.470.30">
    <property type="entry name" value="DNA ligase/mRNA capping enzyme"/>
    <property type="match status" value="1"/>
</dbReference>
<dbReference type="Gene3D" id="1.10.287.610">
    <property type="entry name" value="Helix hairpin bin"/>
    <property type="match status" value="1"/>
</dbReference>
<dbReference type="Gene3D" id="2.40.50.140">
    <property type="entry name" value="Nucleic acid-binding proteins"/>
    <property type="match status" value="1"/>
</dbReference>
<dbReference type="HAMAP" id="MF_01588">
    <property type="entry name" value="DNA_ligase_A"/>
    <property type="match status" value="1"/>
</dbReference>
<dbReference type="InterPro" id="IPR001357">
    <property type="entry name" value="BRCT_dom"/>
</dbReference>
<dbReference type="InterPro" id="IPR036420">
    <property type="entry name" value="BRCT_dom_sf"/>
</dbReference>
<dbReference type="InterPro" id="IPR041663">
    <property type="entry name" value="DisA/LigA_HHH"/>
</dbReference>
<dbReference type="InterPro" id="IPR001679">
    <property type="entry name" value="DNA_ligase"/>
</dbReference>
<dbReference type="InterPro" id="IPR013839">
    <property type="entry name" value="DNAligase_adenylation"/>
</dbReference>
<dbReference type="InterPro" id="IPR013840">
    <property type="entry name" value="DNAligase_N"/>
</dbReference>
<dbReference type="InterPro" id="IPR012340">
    <property type="entry name" value="NA-bd_OB-fold"/>
</dbReference>
<dbReference type="InterPro" id="IPR004150">
    <property type="entry name" value="NAD_DNA_ligase_OB"/>
</dbReference>
<dbReference type="InterPro" id="IPR010994">
    <property type="entry name" value="RuvA_2-like"/>
</dbReference>
<dbReference type="InterPro" id="IPR004149">
    <property type="entry name" value="Znf_DNAligase_C4"/>
</dbReference>
<dbReference type="NCBIfam" id="TIGR00575">
    <property type="entry name" value="dnlj"/>
    <property type="match status" value="1"/>
</dbReference>
<dbReference type="NCBIfam" id="NF005932">
    <property type="entry name" value="PRK07956.1"/>
    <property type="match status" value="1"/>
</dbReference>
<dbReference type="PANTHER" id="PTHR23389">
    <property type="entry name" value="CHROMOSOME TRANSMISSION FIDELITY FACTOR 18"/>
    <property type="match status" value="1"/>
</dbReference>
<dbReference type="PANTHER" id="PTHR23389:SF9">
    <property type="entry name" value="DNA LIGASE"/>
    <property type="match status" value="1"/>
</dbReference>
<dbReference type="Pfam" id="PF00533">
    <property type="entry name" value="BRCT"/>
    <property type="match status" value="1"/>
</dbReference>
<dbReference type="Pfam" id="PF01653">
    <property type="entry name" value="DNA_ligase_aden"/>
    <property type="match status" value="1"/>
</dbReference>
<dbReference type="Pfam" id="PF03120">
    <property type="entry name" value="DNA_ligase_OB"/>
    <property type="match status" value="1"/>
</dbReference>
<dbReference type="Pfam" id="PF03119">
    <property type="entry name" value="DNA_ligase_ZBD"/>
    <property type="match status" value="1"/>
</dbReference>
<dbReference type="Pfam" id="PF12826">
    <property type="entry name" value="HHH_2"/>
    <property type="match status" value="1"/>
</dbReference>
<dbReference type="PIRSF" id="PIRSF001604">
    <property type="entry name" value="LigA"/>
    <property type="match status" value="1"/>
</dbReference>
<dbReference type="SMART" id="SM00292">
    <property type="entry name" value="BRCT"/>
    <property type="match status" value="1"/>
</dbReference>
<dbReference type="SMART" id="SM00532">
    <property type="entry name" value="LIGANc"/>
    <property type="match status" value="1"/>
</dbReference>
<dbReference type="SUPFAM" id="SSF52113">
    <property type="entry name" value="BRCT domain"/>
    <property type="match status" value="1"/>
</dbReference>
<dbReference type="SUPFAM" id="SSF56091">
    <property type="entry name" value="DNA ligase/mRNA capping enzyme, catalytic domain"/>
    <property type="match status" value="1"/>
</dbReference>
<dbReference type="SUPFAM" id="SSF50249">
    <property type="entry name" value="Nucleic acid-binding proteins"/>
    <property type="match status" value="1"/>
</dbReference>
<dbReference type="SUPFAM" id="SSF47781">
    <property type="entry name" value="RuvA domain 2-like"/>
    <property type="match status" value="1"/>
</dbReference>
<dbReference type="PROSITE" id="PS50172">
    <property type="entry name" value="BRCT"/>
    <property type="match status" value="1"/>
</dbReference>
<sequence length="663" mass="75825">MNIKQKIDNLRQEIDNWNYRYYVIYQPIVSDFEFDKKLKELEKLEAQYPEYYDYYSPTQRIGNDINNNFAQINHIYPMLSLSNTYSWEGINDFYNRIKKILNENFVIACELKYDGVSISLIYESGLLLRAVTRGDGTTGDDVTTNIRTVKSIPLKLYGNNYPRFFEIRGEIVFPWAAFNKINKERIENSEPPFANPRNAAAGTLKTLNPQVVSQRNLDAYLYQLLGDNLSSDSHYENLQLAQGWGFKVSNIIKCCKTIDEIENFINYWGKWKKSLPFAVDGVVLKVDSIRQQSLLGRIAKSPRWAIAYKFQSETVKTTLHSVDFQVGRTGIITPIANLEPVLLSGTIVKRASLHNEDIINALDLHIGDQCYVEKGGEIIPKITGINKEARLTFGNKAVNFPKNCPACNTPLIRFQNETAYYCPNYTQCKPQIKGMITHFASRKAMNINVGEETIETFYRAGLVRDIADLYEIKIDDILQLKRWAEKSAINFVESVQQSKQVPYERVLYGLGIHFVGEVVAKRLAKAFPTIEQLSIANNEQLTTIDGIGNQIAQSVIQYFSNENNLQLIRRLKLYGLQLFTIQKIFIDNKLAGKTFIISGIFRKYSRDKYKELIENNGGKNVSSLSAKTDFILSGVNMGPVKLIKAQRFGIKIISEDEFLKMIE</sequence>
<proteinExistence type="inferred from homology"/>
<organism>
    <name type="scientific">Azobacteroides pseudotrichonymphae genomovar. CFP2</name>
    <dbReference type="NCBI Taxonomy" id="511995"/>
    <lineage>
        <taxon>Bacteria</taxon>
        <taxon>Pseudomonadati</taxon>
        <taxon>Bacteroidota</taxon>
        <taxon>Bacteroidia</taxon>
        <taxon>Bacteroidales</taxon>
        <taxon>Candidatus Azobacteroides</taxon>
    </lineage>
</organism>
<name>DNLJ_AZOPC</name>
<keyword id="KW-0227">DNA damage</keyword>
<keyword id="KW-0234">DNA repair</keyword>
<keyword id="KW-0235">DNA replication</keyword>
<keyword id="KW-0436">Ligase</keyword>
<keyword id="KW-0460">Magnesium</keyword>
<keyword id="KW-0464">Manganese</keyword>
<keyword id="KW-0479">Metal-binding</keyword>
<keyword id="KW-0520">NAD</keyword>
<keyword id="KW-1185">Reference proteome</keyword>
<keyword id="KW-0862">Zinc</keyword>
<accession>B6YRR9</accession>